<keyword id="KW-0002">3D-structure</keyword>
<keyword id="KW-0025">Alternative splicing</keyword>
<keyword id="KW-1003">Cell membrane</keyword>
<keyword id="KW-0963">Cytoplasm</keyword>
<keyword id="KW-0209">Deafness</keyword>
<keyword id="KW-0551">Lipid droplet</keyword>
<keyword id="KW-0445">Lipid transport</keyword>
<keyword id="KW-0446">Lipid-binding</keyword>
<keyword id="KW-0472">Membrane</keyword>
<keyword id="KW-1010">Non-syndromic deafness</keyword>
<keyword id="KW-0597">Phosphoprotein</keyword>
<keyword id="KW-1267">Proteomics identification</keyword>
<keyword id="KW-1185">Reference proteome</keyword>
<keyword id="KW-0813">Transport</keyword>
<gene>
    <name type="primary">OSBPL2</name>
    <name type="synonym">KIAA0772</name>
    <name type="synonym">ORP2</name>
</gene>
<proteinExistence type="evidence at protein level"/>
<dbReference type="EMBL" id="AY028168">
    <property type="protein sequence ID" value="AAK18044.1"/>
    <property type="molecule type" value="mRNA"/>
</dbReference>
<dbReference type="EMBL" id="AF392447">
    <property type="protein sequence ID" value="AAL40660.1"/>
    <property type="molecule type" value="mRNA"/>
</dbReference>
<dbReference type="EMBL" id="AB018315">
    <property type="protein sequence ID" value="BAA34492.2"/>
    <property type="status" value="ALT_INIT"/>
    <property type="molecule type" value="mRNA"/>
</dbReference>
<dbReference type="EMBL" id="AK291851">
    <property type="protein sequence ID" value="BAF84540.1"/>
    <property type="molecule type" value="mRNA"/>
</dbReference>
<dbReference type="EMBL" id="CR456722">
    <property type="protein sequence ID" value="CAG33003.1"/>
    <property type="molecule type" value="mRNA"/>
</dbReference>
<dbReference type="EMBL" id="AL354836">
    <property type="status" value="NOT_ANNOTATED_CDS"/>
    <property type="molecule type" value="Genomic_DNA"/>
</dbReference>
<dbReference type="EMBL" id="CH471077">
    <property type="protein sequence ID" value="EAW75377.1"/>
    <property type="molecule type" value="Genomic_DNA"/>
</dbReference>
<dbReference type="EMBL" id="CH471077">
    <property type="protein sequence ID" value="EAW75379.1"/>
    <property type="molecule type" value="Genomic_DNA"/>
</dbReference>
<dbReference type="EMBL" id="BC000296">
    <property type="protein sequence ID" value="AAH00296.1"/>
    <property type="molecule type" value="mRNA"/>
</dbReference>
<dbReference type="EMBL" id="BC004455">
    <property type="protein sequence ID" value="AAH04455.1"/>
    <property type="molecule type" value="mRNA"/>
</dbReference>
<dbReference type="EMBL" id="AF331963">
    <property type="protein sequence ID" value="AAG53416.1"/>
    <property type="molecule type" value="mRNA"/>
</dbReference>
<dbReference type="CCDS" id="CCDS13494.1">
    <molecule id="Q9H1P3-2"/>
</dbReference>
<dbReference type="CCDS" id="CCDS13495.1">
    <molecule id="Q9H1P3-1"/>
</dbReference>
<dbReference type="RefSeq" id="NP_055650.1">
    <molecule id="Q9H1P3-2"/>
    <property type="nucleotide sequence ID" value="NM_014835.5"/>
</dbReference>
<dbReference type="RefSeq" id="NP_653081.1">
    <molecule id="Q9H1P3-1"/>
    <property type="nucleotide sequence ID" value="NM_144498.4"/>
</dbReference>
<dbReference type="RefSeq" id="XP_016883654.1">
    <property type="nucleotide sequence ID" value="XM_017028165.1"/>
</dbReference>
<dbReference type="PDB" id="5ZM8">
    <property type="method" value="X-ray"/>
    <property type="resolution" value="2.70 A"/>
    <property type="chains" value="A/B=49-480"/>
</dbReference>
<dbReference type="PDBsum" id="5ZM8"/>
<dbReference type="SMR" id="Q9H1P3"/>
<dbReference type="BioGRID" id="115216">
    <property type="interactions" value="40"/>
</dbReference>
<dbReference type="ELM" id="Q9H1P3"/>
<dbReference type="FunCoup" id="Q9H1P3">
    <property type="interactions" value="1542"/>
</dbReference>
<dbReference type="IntAct" id="Q9H1P3">
    <property type="interactions" value="18"/>
</dbReference>
<dbReference type="STRING" id="9606.ENSP00000316649"/>
<dbReference type="SwissLipids" id="SLP:000001533"/>
<dbReference type="iPTMnet" id="Q9H1P3"/>
<dbReference type="PhosphoSitePlus" id="Q9H1P3"/>
<dbReference type="BioMuta" id="OSBPL2"/>
<dbReference type="DMDM" id="20139174"/>
<dbReference type="jPOST" id="Q9H1P3"/>
<dbReference type="MassIVE" id="Q9H1P3"/>
<dbReference type="PaxDb" id="9606-ENSP00000316649"/>
<dbReference type="PeptideAtlas" id="Q9H1P3"/>
<dbReference type="ProteomicsDB" id="80434">
    <molecule id="Q9H1P3-1"/>
</dbReference>
<dbReference type="ProteomicsDB" id="80435">
    <molecule id="Q9H1P3-2"/>
</dbReference>
<dbReference type="Pumba" id="Q9H1P3"/>
<dbReference type="Antibodypedia" id="29467">
    <property type="antibodies" value="187 antibodies from 31 providers"/>
</dbReference>
<dbReference type="DNASU" id="9885"/>
<dbReference type="Ensembl" id="ENST00000313733.9">
    <molecule id="Q9H1P3-1"/>
    <property type="protein sequence ID" value="ENSP00000316649.3"/>
    <property type="gene ID" value="ENSG00000130703.17"/>
</dbReference>
<dbReference type="Ensembl" id="ENST00000358053.3">
    <molecule id="Q9H1P3-2"/>
    <property type="protein sequence ID" value="ENSP00000350755.2"/>
    <property type="gene ID" value="ENSG00000130703.17"/>
</dbReference>
<dbReference type="Ensembl" id="ENST00000643412.1">
    <molecule id="Q9H1P3-1"/>
    <property type="protein sequence ID" value="ENSP00000494549.1"/>
    <property type="gene ID" value="ENSG00000130703.17"/>
</dbReference>
<dbReference type="Ensembl" id="ENST00000643981.1">
    <molecule id="Q9H1P3-1"/>
    <property type="protein sequence ID" value="ENSP00000495379.1"/>
    <property type="gene ID" value="ENSG00000130703.17"/>
</dbReference>
<dbReference type="GeneID" id="9885"/>
<dbReference type="KEGG" id="hsa:9885"/>
<dbReference type="MANE-Select" id="ENST00000313733.9">
    <property type="protein sequence ID" value="ENSP00000316649.3"/>
    <property type="RefSeq nucleotide sequence ID" value="NM_144498.4"/>
    <property type="RefSeq protein sequence ID" value="NP_653081.1"/>
</dbReference>
<dbReference type="UCSC" id="uc002yck.3">
    <molecule id="Q9H1P3-1"/>
    <property type="organism name" value="human"/>
</dbReference>
<dbReference type="AGR" id="HGNC:15761"/>
<dbReference type="CTD" id="9885"/>
<dbReference type="DisGeNET" id="9885"/>
<dbReference type="GeneCards" id="OSBPL2"/>
<dbReference type="HGNC" id="HGNC:15761">
    <property type="gene designation" value="OSBPL2"/>
</dbReference>
<dbReference type="HPA" id="ENSG00000130703">
    <property type="expression patterns" value="Low tissue specificity"/>
</dbReference>
<dbReference type="MalaCards" id="OSBPL2"/>
<dbReference type="MIM" id="606731">
    <property type="type" value="gene"/>
</dbReference>
<dbReference type="MIM" id="616340">
    <property type="type" value="phenotype"/>
</dbReference>
<dbReference type="neXtProt" id="NX_Q9H1P3"/>
<dbReference type="OpenTargets" id="ENSG00000130703"/>
<dbReference type="Orphanet" id="90635">
    <property type="disease" value="Rare autosomal dominant non-syndromic sensorineural deafness type DFNA"/>
</dbReference>
<dbReference type="PharmGKB" id="PA32827"/>
<dbReference type="VEuPathDB" id="HostDB:ENSG00000130703"/>
<dbReference type="eggNOG" id="KOG2209">
    <property type="taxonomic scope" value="Eukaryota"/>
</dbReference>
<dbReference type="GeneTree" id="ENSGT00940000158762"/>
<dbReference type="HOGENOM" id="CLU_007105_6_2_1"/>
<dbReference type="InParanoid" id="Q9H1P3"/>
<dbReference type="OMA" id="MSEPLQY"/>
<dbReference type="OrthoDB" id="416222at2759"/>
<dbReference type="PAN-GO" id="Q9H1P3">
    <property type="GO annotations" value="5 GO annotations based on evolutionary models"/>
</dbReference>
<dbReference type="PhylomeDB" id="Q9H1P3"/>
<dbReference type="PathwayCommons" id="Q9H1P3"/>
<dbReference type="Reactome" id="R-HSA-192105">
    <property type="pathway name" value="Synthesis of bile acids and bile salts"/>
</dbReference>
<dbReference type="SignaLink" id="Q9H1P3"/>
<dbReference type="BioGRID-ORCS" id="9885">
    <property type="hits" value="19 hits in 1158 CRISPR screens"/>
</dbReference>
<dbReference type="ChiTaRS" id="OSBPL2">
    <property type="organism name" value="human"/>
</dbReference>
<dbReference type="GeneWiki" id="OSBPL2"/>
<dbReference type="GenomeRNAi" id="9885"/>
<dbReference type="Pharos" id="Q9H1P3">
    <property type="development level" value="Tbio"/>
</dbReference>
<dbReference type="PRO" id="PR:Q9H1P3"/>
<dbReference type="Proteomes" id="UP000005640">
    <property type="component" value="Chromosome 20"/>
</dbReference>
<dbReference type="RNAct" id="Q9H1P3">
    <property type="molecule type" value="protein"/>
</dbReference>
<dbReference type="Bgee" id="ENSG00000130703">
    <property type="expression patterns" value="Expressed in lateral nuclear group of thalamus and 196 other cell types or tissues"/>
</dbReference>
<dbReference type="ExpressionAtlas" id="Q9H1P3">
    <property type="expression patterns" value="baseline and differential"/>
</dbReference>
<dbReference type="GO" id="GO:0009898">
    <property type="term" value="C:cytoplasmic side of plasma membrane"/>
    <property type="evidence" value="ECO:0000314"/>
    <property type="project" value="UniProtKB"/>
</dbReference>
<dbReference type="GO" id="GO:0005829">
    <property type="term" value="C:cytosol"/>
    <property type="evidence" value="ECO:0000314"/>
    <property type="project" value="UniProtKB"/>
</dbReference>
<dbReference type="GO" id="GO:0098978">
    <property type="term" value="C:glutamatergic synapse"/>
    <property type="evidence" value="ECO:0000314"/>
    <property type="project" value="SynGO"/>
</dbReference>
<dbReference type="GO" id="GO:0005811">
    <property type="term" value="C:lipid droplet"/>
    <property type="evidence" value="ECO:0007669"/>
    <property type="project" value="UniProtKB-SubCell"/>
</dbReference>
<dbReference type="GO" id="GO:0097038">
    <property type="term" value="C:perinuclear endoplasmic reticulum"/>
    <property type="evidence" value="ECO:0000318"/>
    <property type="project" value="GO_Central"/>
</dbReference>
<dbReference type="GO" id="GO:0005886">
    <property type="term" value="C:plasma membrane"/>
    <property type="evidence" value="ECO:0000318"/>
    <property type="project" value="GO_Central"/>
</dbReference>
<dbReference type="GO" id="GO:0098831">
    <property type="term" value="C:presynaptic active zone cytoplasmic component"/>
    <property type="evidence" value="ECO:0007669"/>
    <property type="project" value="Ensembl"/>
</dbReference>
<dbReference type="GO" id="GO:0015485">
    <property type="term" value="F:cholesterol binding"/>
    <property type="evidence" value="ECO:0000314"/>
    <property type="project" value="BHF-UCL"/>
</dbReference>
<dbReference type="GO" id="GO:0120020">
    <property type="term" value="F:cholesterol transfer activity"/>
    <property type="evidence" value="ECO:0000315"/>
    <property type="project" value="UniProtKB"/>
</dbReference>
<dbReference type="GO" id="GO:0008526">
    <property type="term" value="F:phosphatidylinositol transfer activity"/>
    <property type="evidence" value="ECO:0000315"/>
    <property type="project" value="UniProtKB"/>
</dbReference>
<dbReference type="GO" id="GO:0005546">
    <property type="term" value="F:phosphatidylinositol-4,5-bisphosphate binding"/>
    <property type="evidence" value="ECO:0000314"/>
    <property type="project" value="UniProtKB"/>
</dbReference>
<dbReference type="GO" id="GO:0120015">
    <property type="term" value="F:sterol transfer activity"/>
    <property type="evidence" value="ECO:0000304"/>
    <property type="project" value="Reactome"/>
</dbReference>
<dbReference type="GO" id="GO:0006699">
    <property type="term" value="P:bile acid biosynthetic process"/>
    <property type="evidence" value="ECO:0000304"/>
    <property type="project" value="Reactome"/>
</dbReference>
<dbReference type="GO" id="GO:0030301">
    <property type="term" value="P:cholesterol transport"/>
    <property type="evidence" value="ECO:0000315"/>
    <property type="project" value="ARUK-UCL"/>
</dbReference>
<dbReference type="GO" id="GO:0032367">
    <property type="term" value="P:intracellular cholesterol transport"/>
    <property type="evidence" value="ECO:0000315"/>
    <property type="project" value="UniProtKB"/>
</dbReference>
<dbReference type="GO" id="GO:0015914">
    <property type="term" value="P:phospholipid transport"/>
    <property type="evidence" value="ECO:0000315"/>
    <property type="project" value="ARUK-UCL"/>
</dbReference>
<dbReference type="GO" id="GO:0007009">
    <property type="term" value="P:plasma membrane organization"/>
    <property type="evidence" value="ECO:0000315"/>
    <property type="project" value="ARUK-UCL"/>
</dbReference>
<dbReference type="GO" id="GO:0051289">
    <property type="term" value="P:protein homotetramerization"/>
    <property type="evidence" value="ECO:0000314"/>
    <property type="project" value="UniProtKB"/>
</dbReference>
<dbReference type="GO" id="GO:0099509">
    <property type="term" value="P:regulation of presynaptic cytosolic calcium ion concentration"/>
    <property type="evidence" value="ECO:0007669"/>
    <property type="project" value="Ensembl"/>
</dbReference>
<dbReference type="GO" id="GO:0010807">
    <property type="term" value="P:regulation of synaptic vesicle priming"/>
    <property type="evidence" value="ECO:0000314"/>
    <property type="project" value="SynGO"/>
</dbReference>
<dbReference type="FunFam" id="2.40.160.120:FF:000005">
    <property type="entry name" value="Oxysterol-binding protein"/>
    <property type="match status" value="1"/>
</dbReference>
<dbReference type="FunFam" id="3.30.70.3490:FF:000003">
    <property type="entry name" value="Oxysterol-binding protein"/>
    <property type="match status" value="1"/>
</dbReference>
<dbReference type="Gene3D" id="2.40.160.120">
    <property type="match status" value="1"/>
</dbReference>
<dbReference type="Gene3D" id="3.30.70.3490">
    <property type="match status" value="1"/>
</dbReference>
<dbReference type="InterPro" id="IPR037239">
    <property type="entry name" value="OSBP_sf"/>
</dbReference>
<dbReference type="InterPro" id="IPR000648">
    <property type="entry name" value="Oxysterol-bd"/>
</dbReference>
<dbReference type="InterPro" id="IPR018494">
    <property type="entry name" value="Oxysterol-bd_CS"/>
</dbReference>
<dbReference type="PANTHER" id="PTHR10972">
    <property type="entry name" value="OXYSTEROL-BINDING PROTEIN-RELATED"/>
    <property type="match status" value="1"/>
</dbReference>
<dbReference type="PANTHER" id="PTHR10972:SF153">
    <property type="entry name" value="OXYSTEROL-BINDING PROTEIN-RELATED PROTEIN 2"/>
    <property type="match status" value="1"/>
</dbReference>
<dbReference type="Pfam" id="PF01237">
    <property type="entry name" value="Oxysterol_BP"/>
    <property type="match status" value="1"/>
</dbReference>
<dbReference type="SUPFAM" id="SSF144000">
    <property type="entry name" value="Oxysterol-binding protein-like"/>
    <property type="match status" value="1"/>
</dbReference>
<dbReference type="PROSITE" id="PS01013">
    <property type="entry name" value="OSBP"/>
    <property type="match status" value="1"/>
</dbReference>
<evidence type="ECO:0000256" key="1">
    <source>
        <dbReference type="SAM" id="MobiDB-lite"/>
    </source>
</evidence>
<evidence type="ECO:0000269" key="2">
    <source>
    </source>
</evidence>
<evidence type="ECO:0000269" key="3">
    <source>
    </source>
</evidence>
<evidence type="ECO:0000269" key="4">
    <source>
    </source>
</evidence>
<evidence type="ECO:0000269" key="5">
    <source>
    </source>
</evidence>
<evidence type="ECO:0000269" key="6">
    <source>
    </source>
</evidence>
<evidence type="ECO:0000269" key="7">
    <source>
    </source>
</evidence>
<evidence type="ECO:0000269" key="8">
    <source>
    </source>
</evidence>
<evidence type="ECO:0000303" key="9">
    <source>
    </source>
</evidence>
<evidence type="ECO:0000303" key="10">
    <source>
    </source>
</evidence>
<evidence type="ECO:0000303" key="11">
    <source>
    </source>
</evidence>
<evidence type="ECO:0000303" key="12">
    <source>
    </source>
</evidence>
<evidence type="ECO:0000305" key="13"/>
<evidence type="ECO:0007744" key="14">
    <source>
        <dbReference type="PDB" id="5ZM8"/>
    </source>
</evidence>
<evidence type="ECO:0007744" key="15">
    <source>
    </source>
</evidence>
<evidence type="ECO:0007829" key="16">
    <source>
        <dbReference type="PDB" id="5ZM8"/>
    </source>
</evidence>
<comment type="function">
    <text evidence="2 3 7">Intracellular transport protein that binds sterols and phospholipids and mediates lipid transport between intracellular compartments. Increases plasma membrane cholesterol levels and decreases phosphatidylinositol-4,5-bisphosphate levels in the cell membrane (PubMed:30581148). Binds phosphoinositides, such as phosphatidylinositol-4,5-bisphosphate (PubMed:30581148). Exhibits strong binding to phosphatidic acid and weak binding to phosphatidylinositol 3-phosphate (PubMed:11279184). Binds cholesterol, dehydroergosterol, 22(R)-hydroxycholesterol and 25-hydroxycholesterol (in vitro) (PubMed:17428193, PubMed:19224871, PubMed:30581148).</text>
</comment>
<comment type="subunit">
    <text evidence="4 7">Monomer. Homotetramer; phosphatidylinositol-4,5-bisphosphate binding promotes formation of stable tetramers (PubMed:30581148). Interacts with DIAPH1.</text>
</comment>
<comment type="interaction">
    <interactant intactId="EBI-2828285">
        <id>Q9H1P3</id>
    </interactant>
    <interactant intactId="EBI-1765160">
        <id>Q9NR09</id>
        <label>BIRC6</label>
    </interactant>
    <organismsDiffer>false</organismsDiffer>
    <experiments>2</experiments>
</comment>
<comment type="interaction">
    <interactant intactId="EBI-2828285">
        <id>Q9H1P3</id>
    </interactant>
    <interactant intactId="EBI-356900">
        <id>P62306</id>
        <label>SNRPF</label>
    </interactant>
    <organismsDiffer>false</organismsDiffer>
    <experiments>3</experiments>
</comment>
<comment type="interaction">
    <interactant intactId="EBI-2828285">
        <id>Q9H1P3</id>
    </interactant>
    <interactant intactId="EBI-1059156">
        <id>Q9P0L0</id>
        <label>VAPA</label>
    </interactant>
    <organismsDiffer>false</organismsDiffer>
    <experiments>3</experiments>
</comment>
<comment type="interaction">
    <interactant intactId="EBI-2828285">
        <id>Q9H1P3</id>
    </interactant>
    <interactant intactId="EBI-1188298">
        <id>O95292</id>
        <label>VAPB</label>
    </interactant>
    <organismsDiffer>false</organismsDiffer>
    <experiments>4</experiments>
</comment>
<comment type="interaction">
    <interactant intactId="EBI-2828285">
        <id>Q9H1P3</id>
    </interactant>
    <interactant intactId="EBI-10178947">
        <id>Q53XM7</id>
        <label>VAPB</label>
    </interactant>
    <organismsDiffer>false</organismsDiffer>
    <experiments>3</experiments>
</comment>
<comment type="subcellular location">
    <subcellularLocation>
        <location evidence="3 7">Cytoplasm</location>
        <location evidence="3 7">Cytosol</location>
    </subcellularLocation>
    <subcellularLocation>
        <location evidence="3">Lipid droplet</location>
    </subcellularLocation>
    <subcellularLocation>
        <location evidence="7">Cell membrane</location>
        <topology evidence="7">Peripheral membrane protein</topology>
        <orientation evidence="7">Cytoplasmic side</orientation>
    </subcellularLocation>
    <text evidence="3 7">Detected on the surface of cytosolic lipid droplets (PubMed:19224871). Recruited to the cell membrane by phosphatidylinositol-phosphate binding (PubMed:30581148).</text>
</comment>
<comment type="alternative products">
    <event type="alternative splicing"/>
    <isoform>
        <id>Q9H1P3-1</id>
        <name>1</name>
        <sequence type="displayed"/>
    </isoform>
    <isoform>
        <id>Q9H1P3-2</id>
        <name>2</name>
        <sequence type="described" ref="VSP_003781"/>
    </isoform>
</comment>
<comment type="tissue specificity">
    <text>Widely expressed.</text>
</comment>
<comment type="disease" evidence="5 6 8">
    <disease id="DI-04416">
        <name>Deafness, autosomal dominant, 67</name>
        <acronym>DFNA67</acronym>
        <description>A form of non-syndromic sensorineural hearing loss. Sensorineural deafness results from damage to the neural receptors of the inner ear, the nerve pathways to the brain, or the area of the brain that receives sound information.</description>
        <dbReference type="MIM" id="616340"/>
    </disease>
    <text>The disease is caused by variants affecting the gene represented in this entry.</text>
</comment>
<comment type="similarity">
    <text evidence="13">Belongs to the OSBP family.</text>
</comment>
<comment type="sequence caution" evidence="13">
    <conflict type="erroneous initiation">
        <sequence resource="EMBL-CDS" id="BAA34492"/>
    </conflict>
    <text>Extended N-terminus.</text>
</comment>
<sequence length="480" mass="55201">MNGEEEFFDAVTGFDSDNSSGEFSEANQKVTGMIDLDTSKNNRIGKTGERPSQENGIQKHRTSLPAPMFSRSDFSVWTILKKCVGLELSKITMPIAFNEPLSFLQRITEYMEHVYLIHRASCQPQPLERMQSVAAFAVSAVASQWERTGKPFNPLLGETYELIREDLGFRFISEQVSHHPPISAFHSEGLNHDFLFHGSIYPKLKFWGKSVEAEPRGTITLELLKHNEAYTWTNPTCCVHNVIIGKLWIEQYGTVEILNHRTGHKCVLHFKPCGLFGKELHKVEGHIQDKNKKKLFMIYGKWTECLWGIDPVSYESFKKQERRGDHLRKAKLDEDSGKADSDVADDVPVAQETVQVIPGSKLLWRINTRPPNSAQMYNFTSFTVSLNELETGMEKTLPPTDCRLRPDIRGMENGNMDLASQEKERLEEKQREARRERAKEEAEWQTRWFYPGNNPYTGTPDWLYAGDYFERNFSDCPDIY</sequence>
<reference key="1">
    <citation type="journal article" date="2001" name="J. Biol. Chem.">
        <title>Novel members of the human oxysterol-binding protein family bind phospholipids and regulate vesicle transport.</title>
        <authorList>
            <person name="Xu Y."/>
            <person name="Liu Y."/>
            <person name="Ridgway N.D."/>
            <person name="McMaster C.R."/>
        </authorList>
    </citation>
    <scope>NUCLEOTIDE SEQUENCE [MRNA] (ISOFORM 2)</scope>
    <scope>FUNCTION</scope>
</reference>
<reference key="2">
    <citation type="journal article" date="2001" name="Genomics">
        <title>A family of 12 human genes containing oxysterol-binding domains.</title>
        <authorList>
            <person name="Jaworski C.J."/>
            <person name="Moreira E."/>
            <person name="Li A."/>
            <person name="Lee R."/>
            <person name="Rodriguez I.R."/>
        </authorList>
    </citation>
    <scope>NUCLEOTIDE SEQUENCE [MRNA] (ISOFORM 2)</scope>
</reference>
<reference key="3">
    <citation type="journal article" date="1998" name="DNA Res.">
        <title>Prediction of the coding sequences of unidentified human genes. XI. The complete sequences of 100 new cDNA clones from brain which code for large proteins in vitro.</title>
        <authorList>
            <person name="Nagase T."/>
            <person name="Ishikawa K."/>
            <person name="Suyama M."/>
            <person name="Kikuno R."/>
            <person name="Miyajima N."/>
            <person name="Tanaka A."/>
            <person name="Kotani H."/>
            <person name="Nomura N."/>
            <person name="Ohara O."/>
        </authorList>
    </citation>
    <scope>NUCLEOTIDE SEQUENCE [LARGE SCALE MRNA] (ISOFORM 2)</scope>
    <source>
        <tissue>Brain</tissue>
    </source>
</reference>
<reference key="4">
    <citation type="journal article" date="2004" name="Nat. Genet.">
        <title>Complete sequencing and characterization of 21,243 full-length human cDNAs.</title>
        <authorList>
            <person name="Ota T."/>
            <person name="Suzuki Y."/>
            <person name="Nishikawa T."/>
            <person name="Otsuki T."/>
            <person name="Sugiyama T."/>
            <person name="Irie R."/>
            <person name="Wakamatsu A."/>
            <person name="Hayashi K."/>
            <person name="Sato H."/>
            <person name="Nagai K."/>
            <person name="Kimura K."/>
            <person name="Makita H."/>
            <person name="Sekine M."/>
            <person name="Obayashi M."/>
            <person name="Nishi T."/>
            <person name="Shibahara T."/>
            <person name="Tanaka T."/>
            <person name="Ishii S."/>
            <person name="Yamamoto J."/>
            <person name="Saito K."/>
            <person name="Kawai Y."/>
            <person name="Isono Y."/>
            <person name="Nakamura Y."/>
            <person name="Nagahari K."/>
            <person name="Murakami K."/>
            <person name="Yasuda T."/>
            <person name="Iwayanagi T."/>
            <person name="Wagatsuma M."/>
            <person name="Shiratori A."/>
            <person name="Sudo H."/>
            <person name="Hosoiri T."/>
            <person name="Kaku Y."/>
            <person name="Kodaira H."/>
            <person name="Kondo H."/>
            <person name="Sugawara M."/>
            <person name="Takahashi M."/>
            <person name="Kanda K."/>
            <person name="Yokoi T."/>
            <person name="Furuya T."/>
            <person name="Kikkawa E."/>
            <person name="Omura Y."/>
            <person name="Abe K."/>
            <person name="Kamihara K."/>
            <person name="Katsuta N."/>
            <person name="Sato K."/>
            <person name="Tanikawa M."/>
            <person name="Yamazaki M."/>
            <person name="Ninomiya K."/>
            <person name="Ishibashi T."/>
            <person name="Yamashita H."/>
            <person name="Murakawa K."/>
            <person name="Fujimori K."/>
            <person name="Tanai H."/>
            <person name="Kimata M."/>
            <person name="Watanabe M."/>
            <person name="Hiraoka S."/>
            <person name="Chiba Y."/>
            <person name="Ishida S."/>
            <person name="Ono Y."/>
            <person name="Takiguchi S."/>
            <person name="Watanabe S."/>
            <person name="Yosida M."/>
            <person name="Hotuta T."/>
            <person name="Kusano J."/>
            <person name="Kanehori K."/>
            <person name="Takahashi-Fujii A."/>
            <person name="Hara H."/>
            <person name="Tanase T.-O."/>
            <person name="Nomura Y."/>
            <person name="Togiya S."/>
            <person name="Komai F."/>
            <person name="Hara R."/>
            <person name="Takeuchi K."/>
            <person name="Arita M."/>
            <person name="Imose N."/>
            <person name="Musashino K."/>
            <person name="Yuuki H."/>
            <person name="Oshima A."/>
            <person name="Sasaki N."/>
            <person name="Aotsuka S."/>
            <person name="Yoshikawa Y."/>
            <person name="Matsunawa H."/>
            <person name="Ichihara T."/>
            <person name="Shiohata N."/>
            <person name="Sano S."/>
            <person name="Moriya S."/>
            <person name="Momiyama H."/>
            <person name="Satoh N."/>
            <person name="Takami S."/>
            <person name="Terashima Y."/>
            <person name="Suzuki O."/>
            <person name="Nakagawa S."/>
            <person name="Senoh A."/>
            <person name="Mizoguchi H."/>
            <person name="Goto Y."/>
            <person name="Shimizu F."/>
            <person name="Wakebe H."/>
            <person name="Hishigaki H."/>
            <person name="Watanabe T."/>
            <person name="Sugiyama A."/>
            <person name="Takemoto M."/>
            <person name="Kawakami B."/>
            <person name="Yamazaki M."/>
            <person name="Watanabe K."/>
            <person name="Kumagai A."/>
            <person name="Itakura S."/>
            <person name="Fukuzumi Y."/>
            <person name="Fujimori Y."/>
            <person name="Komiyama M."/>
            <person name="Tashiro H."/>
            <person name="Tanigami A."/>
            <person name="Fujiwara T."/>
            <person name="Ono T."/>
            <person name="Yamada K."/>
            <person name="Fujii Y."/>
            <person name="Ozaki K."/>
            <person name="Hirao M."/>
            <person name="Ohmori Y."/>
            <person name="Kawabata A."/>
            <person name="Hikiji T."/>
            <person name="Kobatake N."/>
            <person name="Inagaki H."/>
            <person name="Ikema Y."/>
            <person name="Okamoto S."/>
            <person name="Okitani R."/>
            <person name="Kawakami T."/>
            <person name="Noguchi S."/>
            <person name="Itoh T."/>
            <person name="Shigeta K."/>
            <person name="Senba T."/>
            <person name="Matsumura K."/>
            <person name="Nakajima Y."/>
            <person name="Mizuno T."/>
            <person name="Morinaga M."/>
            <person name="Sasaki M."/>
            <person name="Togashi T."/>
            <person name="Oyama M."/>
            <person name="Hata H."/>
            <person name="Watanabe M."/>
            <person name="Komatsu T."/>
            <person name="Mizushima-Sugano J."/>
            <person name="Satoh T."/>
            <person name="Shirai Y."/>
            <person name="Takahashi Y."/>
            <person name="Nakagawa K."/>
            <person name="Okumura K."/>
            <person name="Nagase T."/>
            <person name="Nomura N."/>
            <person name="Kikuchi H."/>
            <person name="Masuho Y."/>
            <person name="Yamashita R."/>
            <person name="Nakai K."/>
            <person name="Yada T."/>
            <person name="Nakamura Y."/>
            <person name="Ohara O."/>
            <person name="Isogai T."/>
            <person name="Sugano S."/>
        </authorList>
    </citation>
    <scope>NUCLEOTIDE SEQUENCE [LARGE SCALE MRNA] (ISOFORM 2)</scope>
    <source>
        <tissue>Rectum</tissue>
    </source>
</reference>
<reference key="5">
    <citation type="submission" date="2004-06" db="EMBL/GenBank/DDBJ databases">
        <title>Cloning of human full open reading frames in Gateway(TM) system entry vector (pDONR201).</title>
        <authorList>
            <person name="Ebert L."/>
            <person name="Schick M."/>
            <person name="Neubert P."/>
            <person name="Schatten R."/>
            <person name="Henze S."/>
            <person name="Korn B."/>
        </authorList>
    </citation>
    <scope>NUCLEOTIDE SEQUENCE [LARGE SCALE MRNA] (ISOFORM 1)</scope>
</reference>
<reference key="6">
    <citation type="journal article" date="2001" name="Nature">
        <title>The DNA sequence and comparative analysis of human chromosome 20.</title>
        <authorList>
            <person name="Deloukas P."/>
            <person name="Matthews L.H."/>
            <person name="Ashurst J.L."/>
            <person name="Burton J."/>
            <person name="Gilbert J.G.R."/>
            <person name="Jones M."/>
            <person name="Stavrides G."/>
            <person name="Almeida J.P."/>
            <person name="Babbage A.K."/>
            <person name="Bagguley C.L."/>
            <person name="Bailey J."/>
            <person name="Barlow K.F."/>
            <person name="Bates K.N."/>
            <person name="Beard L.M."/>
            <person name="Beare D.M."/>
            <person name="Beasley O.P."/>
            <person name="Bird C.P."/>
            <person name="Blakey S.E."/>
            <person name="Bridgeman A.M."/>
            <person name="Brown A.J."/>
            <person name="Buck D."/>
            <person name="Burrill W.D."/>
            <person name="Butler A.P."/>
            <person name="Carder C."/>
            <person name="Carter N.P."/>
            <person name="Chapman J.C."/>
            <person name="Clamp M."/>
            <person name="Clark G."/>
            <person name="Clark L.N."/>
            <person name="Clark S.Y."/>
            <person name="Clee C.M."/>
            <person name="Clegg S."/>
            <person name="Cobley V.E."/>
            <person name="Collier R.E."/>
            <person name="Connor R.E."/>
            <person name="Corby N.R."/>
            <person name="Coulson A."/>
            <person name="Coville G.J."/>
            <person name="Deadman R."/>
            <person name="Dhami P.D."/>
            <person name="Dunn M."/>
            <person name="Ellington A.G."/>
            <person name="Frankland J.A."/>
            <person name="Fraser A."/>
            <person name="French L."/>
            <person name="Garner P."/>
            <person name="Grafham D.V."/>
            <person name="Griffiths C."/>
            <person name="Griffiths M.N.D."/>
            <person name="Gwilliam R."/>
            <person name="Hall R.E."/>
            <person name="Hammond S."/>
            <person name="Harley J.L."/>
            <person name="Heath P.D."/>
            <person name="Ho S."/>
            <person name="Holden J.L."/>
            <person name="Howden P.J."/>
            <person name="Huckle E."/>
            <person name="Hunt A.R."/>
            <person name="Hunt S.E."/>
            <person name="Jekosch K."/>
            <person name="Johnson C.M."/>
            <person name="Johnson D."/>
            <person name="Kay M.P."/>
            <person name="Kimberley A.M."/>
            <person name="King A."/>
            <person name="Knights A."/>
            <person name="Laird G.K."/>
            <person name="Lawlor S."/>
            <person name="Lehvaeslaiho M.H."/>
            <person name="Leversha M.A."/>
            <person name="Lloyd C."/>
            <person name="Lloyd D.M."/>
            <person name="Lovell J.D."/>
            <person name="Marsh V.L."/>
            <person name="Martin S.L."/>
            <person name="McConnachie L.J."/>
            <person name="McLay K."/>
            <person name="McMurray A.A."/>
            <person name="Milne S.A."/>
            <person name="Mistry D."/>
            <person name="Moore M.J.F."/>
            <person name="Mullikin J.C."/>
            <person name="Nickerson T."/>
            <person name="Oliver K."/>
            <person name="Parker A."/>
            <person name="Patel R."/>
            <person name="Pearce T.A.V."/>
            <person name="Peck A.I."/>
            <person name="Phillimore B.J.C.T."/>
            <person name="Prathalingam S.R."/>
            <person name="Plumb R.W."/>
            <person name="Ramsay H."/>
            <person name="Rice C.M."/>
            <person name="Ross M.T."/>
            <person name="Scott C.E."/>
            <person name="Sehra H.K."/>
            <person name="Shownkeen R."/>
            <person name="Sims S."/>
            <person name="Skuce C.D."/>
            <person name="Smith M.L."/>
            <person name="Soderlund C."/>
            <person name="Steward C.A."/>
            <person name="Sulston J.E."/>
            <person name="Swann R.M."/>
            <person name="Sycamore N."/>
            <person name="Taylor R."/>
            <person name="Tee L."/>
            <person name="Thomas D.W."/>
            <person name="Thorpe A."/>
            <person name="Tracey A."/>
            <person name="Tromans A.C."/>
            <person name="Vaudin M."/>
            <person name="Wall M."/>
            <person name="Wallis J.M."/>
            <person name="Whitehead S.L."/>
            <person name="Whittaker P."/>
            <person name="Willey D.L."/>
            <person name="Williams L."/>
            <person name="Williams S.A."/>
            <person name="Wilming L."/>
            <person name="Wray P.W."/>
            <person name="Hubbard T."/>
            <person name="Durbin R.M."/>
            <person name="Bentley D.R."/>
            <person name="Beck S."/>
            <person name="Rogers J."/>
        </authorList>
    </citation>
    <scope>NUCLEOTIDE SEQUENCE [LARGE SCALE GENOMIC DNA] (ISOFORMS 1 AND 2)</scope>
</reference>
<reference key="7">
    <citation type="submission" date="2005-09" db="EMBL/GenBank/DDBJ databases">
        <authorList>
            <person name="Mural R.J."/>
            <person name="Istrail S."/>
            <person name="Sutton G.G."/>
            <person name="Florea L."/>
            <person name="Halpern A.L."/>
            <person name="Mobarry C.M."/>
            <person name="Lippert R."/>
            <person name="Walenz B."/>
            <person name="Shatkay H."/>
            <person name="Dew I."/>
            <person name="Miller J.R."/>
            <person name="Flanigan M.J."/>
            <person name="Edwards N.J."/>
            <person name="Bolanos R."/>
            <person name="Fasulo D."/>
            <person name="Halldorsson B.V."/>
            <person name="Hannenhalli S."/>
            <person name="Turner R."/>
            <person name="Yooseph S."/>
            <person name="Lu F."/>
            <person name="Nusskern D.R."/>
            <person name="Shue B.C."/>
            <person name="Zheng X.H."/>
            <person name="Zhong F."/>
            <person name="Delcher A.L."/>
            <person name="Huson D.H."/>
            <person name="Kravitz S.A."/>
            <person name="Mouchard L."/>
            <person name="Reinert K."/>
            <person name="Remington K.A."/>
            <person name="Clark A.G."/>
            <person name="Waterman M.S."/>
            <person name="Eichler E.E."/>
            <person name="Adams M.D."/>
            <person name="Hunkapiller M.W."/>
            <person name="Myers E.W."/>
            <person name="Venter J.C."/>
        </authorList>
    </citation>
    <scope>NUCLEOTIDE SEQUENCE [LARGE SCALE GENOMIC DNA]</scope>
</reference>
<reference key="8">
    <citation type="journal article" date="2004" name="Genome Res.">
        <title>The status, quality, and expansion of the NIH full-length cDNA project: the Mammalian Gene Collection (MGC).</title>
        <authorList>
            <consortium name="The MGC Project Team"/>
        </authorList>
    </citation>
    <scope>NUCLEOTIDE SEQUENCE [LARGE SCALE MRNA] (ISOFORM 1)</scope>
    <source>
        <tissue>Lung</tissue>
    </source>
</reference>
<reference key="9">
    <citation type="journal article" date="2001" name="J. Lipid Res.">
        <title>The OSBP-related protein family in humans.</title>
        <authorList>
            <person name="Lehto M."/>
            <person name="Laitinen S."/>
            <person name="Chinetti G."/>
            <person name="Johansson M."/>
            <person name="Ehnholm C."/>
            <person name="Staels B."/>
            <person name="Ikonen E."/>
            <person name="Olkkonen V.M."/>
        </authorList>
    </citation>
    <scope>NUCLEOTIDE SEQUENCE [MRNA] OF 1-116 (ISOFORM 1)</scope>
</reference>
<reference key="10">
    <citation type="journal article" date="2007" name="Biochem. J.">
        <title>The mammalian oxysterol-binding protein-related proteins (ORPs) bind 25-hydroxycholesterol in an evolutionarily conserved pocket.</title>
        <authorList>
            <person name="Suchanek M."/>
            <person name="Hynynen R."/>
            <person name="Wohlfahrt G."/>
            <person name="Lehto M."/>
            <person name="Johansson M."/>
            <person name="Saarinen H."/>
            <person name="Radzikowska A."/>
            <person name="Thiele C."/>
            <person name="Olkkonen V.M."/>
        </authorList>
    </citation>
    <scope>FUNCTION</scope>
    <scope>MUTAGENESIS OF MET-93; PHE-103; LYS-150; PHE-152 AND ILE-249</scope>
</reference>
<reference key="11">
    <citation type="journal article" date="2009" name="J. Lipid Res.">
        <title>OSBP-related protein 2 is a sterol receptor on lipid droplets that regulates the metabolism of neutral lipids.</title>
        <authorList>
            <person name="Hynynen R."/>
            <person name="Suchanek M."/>
            <person name="Spandl J."/>
            <person name="Baeck N."/>
            <person name="Thiele C."/>
            <person name="Olkkonen V.M."/>
        </authorList>
    </citation>
    <scope>FUNCTION</scope>
    <scope>SUBCELLULAR LOCATION</scope>
    <scope>MUTAGENESIS OF ILE-249</scope>
</reference>
<reference key="12">
    <citation type="journal article" date="2011" name="BMC Syst. Biol.">
        <title>Initial characterization of the human central proteome.</title>
        <authorList>
            <person name="Burkard T.R."/>
            <person name="Planyavsky M."/>
            <person name="Kaupe I."/>
            <person name="Breitwieser F.P."/>
            <person name="Buerckstuemmer T."/>
            <person name="Bennett K.L."/>
            <person name="Superti-Furga G."/>
            <person name="Colinge J."/>
        </authorList>
    </citation>
    <scope>IDENTIFICATION BY MASS SPECTROMETRY [LARGE SCALE ANALYSIS]</scope>
</reference>
<reference key="13">
    <citation type="journal article" date="2012" name="Proc. Natl. Acad. Sci. U.S.A.">
        <title>N-terminal acetylome analyses and functional insights of the N-terminal acetyltransferase NatB.</title>
        <authorList>
            <person name="Van Damme P."/>
            <person name="Lasa M."/>
            <person name="Polevoda B."/>
            <person name="Gazquez C."/>
            <person name="Elosegui-Artola A."/>
            <person name="Kim D.S."/>
            <person name="De Juan-Pardo E."/>
            <person name="Demeyer K."/>
            <person name="Hole K."/>
            <person name="Larrea E."/>
            <person name="Timmerman E."/>
            <person name="Prieto J."/>
            <person name="Arnesen T."/>
            <person name="Sherman F."/>
            <person name="Gevaert K."/>
            <person name="Aldabe R."/>
        </authorList>
    </citation>
    <scope>IDENTIFICATION BY MASS SPECTROMETRY [LARGE SCALE ANALYSIS]</scope>
</reference>
<reference key="14">
    <citation type="journal article" date="2013" name="Mol. Biol. Cell">
        <title>cAMP-stimulated phosphorylation of diaphanous 1 regulates protein stability and interaction with binding partners in adrenocortical cells.</title>
        <authorList>
            <person name="Li D."/>
            <person name="Dammer E.B."/>
            <person name="Lucki N.C."/>
            <person name="Sewer M.B."/>
        </authorList>
    </citation>
    <scope>INTERACTION WITH DIAPH1</scope>
    <scope>IDENTIFICATION BY MASS SPECTROMETRY</scope>
</reference>
<reference key="15">
    <citation type="journal article" date="2014" name="J. Proteomics">
        <title>An enzyme assisted RP-RPLC approach for in-depth analysis of human liver phosphoproteome.</title>
        <authorList>
            <person name="Bian Y."/>
            <person name="Song C."/>
            <person name="Cheng K."/>
            <person name="Dong M."/>
            <person name="Wang F."/>
            <person name="Huang J."/>
            <person name="Sun D."/>
            <person name="Wang L."/>
            <person name="Ye M."/>
            <person name="Zou H."/>
        </authorList>
    </citation>
    <scope>PHOSPHORYLATION [LARGE SCALE ANALYSIS] AT SER-19 AND SER-20</scope>
    <scope>IDENTIFICATION BY MASS SPECTROMETRY [LARGE SCALE ANALYSIS]</scope>
    <source>
        <tissue>Liver</tissue>
    </source>
</reference>
<reference key="16">
    <citation type="journal article" date="2019" name="Mol. Cell">
        <title>ORP2 Delivers Cholesterol to the Plasma Membrane in Exchange for Phosphatidylinositol 4, 5-Bisphosphate (PI(4,5)P2).</title>
        <authorList>
            <person name="Wang H."/>
            <person name="Ma Q."/>
            <person name="Qi Y."/>
            <person name="Dong J."/>
            <person name="Du X."/>
            <person name="Rae J."/>
            <person name="Wang J."/>
            <person name="Wu W.F."/>
            <person name="Brown A.J."/>
            <person name="Parton R.G."/>
            <person name="Wu J.W."/>
            <person name="Yang H."/>
        </authorList>
    </citation>
    <scope>X-RAY CRYSTALLOGRAPHY (2.70 ANGSTROMS) OF 49-480 IN COMPLEX WITH PHOSPHATIDYLINOSITOL-BISPHOSPHATE</scope>
    <scope>FUNCTION</scope>
    <scope>SUBUNIT</scope>
    <scope>SUBCELLULAR LOCATION</scope>
    <scope>MUTAGENESIS OF ILE-79; CYS-83; 87-GLU--LYS-90; TYR-110; 178-HIS-HIS-179; PRO-215 AND LYS-423</scope>
</reference>
<reference key="17">
    <citation type="journal article" date="2015" name="Genet. Med.">
        <title>Identification of OSBPL2 as a novel candidate gene for progressive nonsyndromic hearing loss by whole-exome sequencing.</title>
        <authorList>
            <person name="Xing G."/>
            <person name="Yao J."/>
            <person name="Wu B."/>
            <person name="Liu T."/>
            <person name="Wei Q."/>
            <person name="Liu C."/>
            <person name="Lu Y."/>
            <person name="Chen Z."/>
            <person name="Zheng H."/>
            <person name="Yang X."/>
            <person name="Cao X."/>
        </authorList>
    </citation>
    <scope>INVOLVEMENT IN DFNA67</scope>
</reference>
<reference key="18">
    <citation type="journal article" date="2015" name="Orphanet J. Rare Dis.">
        <title>OSBPL2 encodes a protein of inner and outer hair cell stereocilia and is mutated in autosomal dominant hearing loss (DFNA67).</title>
        <authorList>
            <person name="Thoenes M."/>
            <person name="Zimmermann U."/>
            <person name="Ebermann I."/>
            <person name="Ptok M."/>
            <person name="Lewis M.A."/>
            <person name="Thiele H."/>
            <person name="Morlot S."/>
            <person name="Hess M.M."/>
            <person name="Gal A."/>
            <person name="Eisenberger T."/>
            <person name="Bergmann C."/>
            <person name="Nuernberg G."/>
            <person name="Nuernberg P."/>
            <person name="Steel K.P."/>
            <person name="Knipper M."/>
            <person name="Bolz H.J."/>
        </authorList>
    </citation>
    <scope>INVOLVEMENT IN DFNA67</scope>
</reference>
<reference key="19">
    <citation type="journal article" date="2019" name="BMC Med. Genet.">
        <title>A novel pathogenic variant in OSBPL2 linked to hereditary late-onset deafness in a Mongolian family.</title>
        <authorList>
            <person name="Wu N."/>
            <person name="Husile H."/>
            <person name="Yang L."/>
            <person name="Cao Y."/>
            <person name="Li X."/>
            <person name="Huo W."/>
            <person name="Bai H."/>
            <person name="Liu Y."/>
            <person name="Wu Q."/>
        </authorList>
    </citation>
    <scope>INVOLVEMENT IN DFNA67</scope>
</reference>
<protein>
    <recommendedName>
        <fullName>Oxysterol-binding protein-related protein 2</fullName>
        <shortName>ORP-2</shortName>
        <shortName>OSBP-related protein 2</shortName>
    </recommendedName>
</protein>
<feature type="chain" id="PRO_0000100369" description="Oxysterol-binding protein-related protein 2">
    <location>
        <begin position="1"/>
        <end position="480"/>
    </location>
</feature>
<feature type="region of interest" description="Disordered" evidence="1">
    <location>
        <begin position="1"/>
        <end position="60"/>
    </location>
</feature>
<feature type="compositionally biased region" description="Polar residues" evidence="1">
    <location>
        <begin position="15"/>
        <end position="30"/>
    </location>
</feature>
<feature type="binding site" evidence="7 14">
    <location>
        <position position="90"/>
    </location>
    <ligand>
        <name>a 1,2-diacyl-sn-glycero-3-phospho-(1D-myo-inositol-4,5-bisphosphate)</name>
        <dbReference type="ChEBI" id="CHEBI:58456"/>
    </ligand>
</feature>
<feature type="binding site" evidence="7 14">
    <location>
        <begin position="178"/>
        <end position="179"/>
    </location>
    <ligand>
        <name>a 1,2-diacyl-sn-glycero-3-phospho-(1D-myo-inositol-4,5-bisphosphate)</name>
        <dbReference type="ChEBI" id="CHEBI:58456"/>
    </ligand>
</feature>
<feature type="binding site" evidence="7 14">
    <location>
        <begin position="427"/>
        <end position="431"/>
    </location>
    <ligand>
        <name>a 1,2-diacyl-sn-glycero-3-phospho-(1D-myo-inositol-4,5-bisphosphate)</name>
        <dbReference type="ChEBI" id="CHEBI:58456"/>
    </ligand>
</feature>
<feature type="modified residue" description="Phosphoserine" evidence="15">
    <location>
        <position position="19"/>
    </location>
</feature>
<feature type="modified residue" description="Phosphoserine" evidence="15">
    <location>
        <position position="20"/>
    </location>
</feature>
<feature type="splice variant" id="VSP_003781" description="In isoform 2." evidence="9 10 11 12">
    <location>
        <begin position="13"/>
        <end position="24"/>
    </location>
</feature>
<feature type="mutagenesis site" description="No effect on phosphatidylinositide binding, but impaired tetramerization and decreased cholesterol binding, plus decreased cholesterol and phosphatidylinositide transport." evidence="7">
    <original>I</original>
    <variation>A</variation>
    <location>
        <position position="79"/>
    </location>
</feature>
<feature type="mutagenesis site" description="No effect on phosphatidylinositide binding, but impaired tetramerization and decreased cholesterol binding, plus decreased cholesterol and phosphatidylinositide transport." evidence="7">
    <original>C</original>
    <variation>A</variation>
    <location>
        <position position="83"/>
    </location>
</feature>
<feature type="mutagenesis site" description="Loss of the ability to promote cholesterol accumulation at the cell membrane. No effect on phosphatidylinositide levels at the cell membrane." evidence="7">
    <location>
        <begin position="87"/>
        <end position="90"/>
    </location>
</feature>
<feature type="mutagenesis site" description="Mildly decreased 25-hydroxycholesterol binding." evidence="2">
    <original>M</original>
    <variation>K</variation>
    <location>
        <position position="93"/>
    </location>
</feature>
<feature type="mutagenesis site" description="Mildly decreased 25-hydroxycholesterol binding." evidence="2">
    <original>F</original>
    <variation>W</variation>
    <location>
        <position position="103"/>
    </location>
</feature>
<feature type="mutagenesis site" description="No effect on phosphatidylinositide binding, but decreased cholesterol binding, plus decreased cholesterol and phosphatidylinositide transport." evidence="7">
    <original>Y</original>
    <variation>A</variation>
    <location>
        <position position="110"/>
    </location>
</feature>
<feature type="mutagenesis site" description="Reduces 25-hydroxycholesterol binding." evidence="2">
    <original>K</original>
    <variation>A</variation>
    <location>
        <position position="150"/>
    </location>
</feature>
<feature type="mutagenesis site" description="Does not significantly impair 25-hydroxycholesterol binding." evidence="2">
    <original>F</original>
    <variation>D</variation>
    <location>
        <position position="152"/>
    </location>
</feature>
<feature type="mutagenesis site" description="Loss of increased cholesterol and decreased phosphatidylinositide accumulation at the cell membrane." evidence="7">
    <original>HH</original>
    <variation>DD</variation>
    <location>
        <begin position="178"/>
        <end position="179"/>
    </location>
</feature>
<feature type="mutagenesis site" description="No effect on phosphatidylinositide binding, but decreased cholesterol binding, plus decreased cholesterol and phosphatidylinositide transport." evidence="7">
    <original>P</original>
    <variation>A</variation>
    <location>
        <position position="215"/>
    </location>
</feature>
<feature type="mutagenesis site" description="Reduces 25-hydroxycholesterol binding. Loss of 22(R)-hydroxycholesterol binding." evidence="2 3">
    <original>I</original>
    <variation>W</variation>
    <location>
        <position position="249"/>
    </location>
</feature>
<feature type="mutagenesis site" description="Loss of increased cholesterol and decreased phosphatidylinositide accumulation at the cell membrane." evidence="7">
    <original>K</original>
    <variation>A</variation>
    <location>
        <position position="423"/>
    </location>
</feature>
<feature type="helix" evidence="16">
    <location>
        <begin position="76"/>
        <end position="82"/>
    </location>
</feature>
<feature type="helix" evidence="16">
    <location>
        <begin position="95"/>
        <end position="97"/>
    </location>
</feature>
<feature type="strand" evidence="16">
    <location>
        <begin position="98"/>
        <end position="102"/>
    </location>
</feature>
<feature type="helix" evidence="16">
    <location>
        <begin position="103"/>
        <end position="108"/>
    </location>
</feature>
<feature type="helix" evidence="16">
    <location>
        <begin position="109"/>
        <end position="114"/>
    </location>
</feature>
<feature type="helix" evidence="16">
    <location>
        <begin position="115"/>
        <end position="121"/>
    </location>
</feature>
<feature type="helix" evidence="16">
    <location>
        <begin position="126"/>
        <end position="140"/>
    </location>
</feature>
<feature type="helix" evidence="16">
    <location>
        <begin position="141"/>
        <end position="144"/>
    </location>
</feature>
<feature type="strand" evidence="16">
    <location>
        <begin position="149"/>
        <end position="152"/>
    </location>
</feature>
<feature type="strand" evidence="16">
    <location>
        <begin position="159"/>
        <end position="164"/>
    </location>
</feature>
<feature type="turn" evidence="16">
    <location>
        <begin position="165"/>
        <end position="168"/>
    </location>
</feature>
<feature type="strand" evidence="16">
    <location>
        <begin position="169"/>
        <end position="177"/>
    </location>
</feature>
<feature type="turn" evidence="16">
    <location>
        <begin position="178"/>
        <end position="181"/>
    </location>
</feature>
<feature type="strand" evidence="16">
    <location>
        <begin position="182"/>
        <end position="189"/>
    </location>
</feature>
<feature type="strand" evidence="16">
    <location>
        <begin position="194"/>
        <end position="207"/>
    </location>
</feature>
<feature type="strand" evidence="16">
    <location>
        <begin position="210"/>
        <end position="217"/>
    </location>
</feature>
<feature type="strand" evidence="16">
    <location>
        <begin position="219"/>
        <end position="223"/>
    </location>
</feature>
<feature type="helix" evidence="16">
    <location>
        <begin position="224"/>
        <end position="226"/>
    </location>
</feature>
<feature type="strand" evidence="16">
    <location>
        <begin position="228"/>
        <end position="232"/>
    </location>
</feature>
<feature type="strand" evidence="16">
    <location>
        <begin position="236"/>
        <end position="240"/>
    </location>
</feature>
<feature type="strand" evidence="16">
    <location>
        <begin position="242"/>
        <end position="245"/>
    </location>
</feature>
<feature type="strand" evidence="16">
    <location>
        <begin position="248"/>
        <end position="259"/>
    </location>
</feature>
<feature type="turn" evidence="16">
    <location>
        <begin position="260"/>
        <end position="262"/>
    </location>
</feature>
<feature type="strand" evidence="16">
    <location>
        <begin position="265"/>
        <end position="270"/>
    </location>
</feature>
<feature type="helix" evidence="16">
    <location>
        <begin position="275"/>
        <end position="277"/>
    </location>
</feature>
<feature type="turn" evidence="16">
    <location>
        <begin position="278"/>
        <end position="281"/>
    </location>
</feature>
<feature type="strand" evidence="16">
    <location>
        <begin position="282"/>
        <end position="288"/>
    </location>
</feature>
<feature type="strand" evidence="16">
    <location>
        <begin position="294"/>
        <end position="301"/>
    </location>
</feature>
<feature type="strand" evidence="16">
    <location>
        <begin position="304"/>
        <end position="309"/>
    </location>
</feature>
<feature type="helix" evidence="16">
    <location>
        <begin position="311"/>
        <end position="315"/>
    </location>
</feature>
<feature type="helix" evidence="16">
    <location>
        <begin position="317"/>
        <end position="331"/>
    </location>
</feature>
<feature type="strand" evidence="16">
    <location>
        <begin position="361"/>
        <end position="365"/>
    </location>
</feature>
<feature type="helix" evidence="16">
    <location>
        <begin position="374"/>
        <end position="376"/>
    </location>
</feature>
<feature type="helix" evidence="16">
    <location>
        <begin position="381"/>
        <end position="384"/>
    </location>
</feature>
<feature type="turn" evidence="16">
    <location>
        <begin position="385"/>
        <end position="387"/>
    </location>
</feature>
<feature type="helix" evidence="16">
    <location>
        <begin position="393"/>
        <end position="395"/>
    </location>
</feature>
<feature type="helix" evidence="16">
    <location>
        <begin position="402"/>
        <end position="404"/>
    </location>
</feature>
<feature type="helix" evidence="16">
    <location>
        <begin position="406"/>
        <end position="412"/>
    </location>
</feature>
<feature type="helix" evidence="16">
    <location>
        <begin position="416"/>
        <end position="439"/>
    </location>
</feature>
<feature type="strand" evidence="16">
    <location>
        <begin position="447"/>
        <end position="453"/>
    </location>
</feature>
<feature type="turn" evidence="16">
    <location>
        <begin position="455"/>
        <end position="457"/>
    </location>
</feature>
<feature type="strand" evidence="16">
    <location>
        <begin position="460"/>
        <end position="464"/>
    </location>
</feature>
<name>OSBL2_HUMAN</name>
<organism>
    <name type="scientific">Homo sapiens</name>
    <name type="common">Human</name>
    <dbReference type="NCBI Taxonomy" id="9606"/>
    <lineage>
        <taxon>Eukaryota</taxon>
        <taxon>Metazoa</taxon>
        <taxon>Chordata</taxon>
        <taxon>Craniata</taxon>
        <taxon>Vertebrata</taxon>
        <taxon>Euteleostomi</taxon>
        <taxon>Mammalia</taxon>
        <taxon>Eutheria</taxon>
        <taxon>Euarchontoglires</taxon>
        <taxon>Primates</taxon>
        <taxon>Haplorrhini</taxon>
        <taxon>Catarrhini</taxon>
        <taxon>Hominidae</taxon>
        <taxon>Homo</taxon>
    </lineage>
</organism>
<accession>Q9H1P3</accession>
<accession>A8K736</accession>
<accession>Q6IBT0</accession>
<accession>Q9BZB1</accession>
<accession>Q9Y4B8</accession>